<name>SCRB_VIBAL</name>
<proteinExistence type="evidence at transcript level"/>
<protein>
    <recommendedName>
        <fullName>Sucrose-6-phosphate hydrolase</fullName>
        <shortName>Sucrase</shortName>
        <ecNumber>3.2.1.26</ecNumber>
    </recommendedName>
    <alternativeName>
        <fullName>Invertase</fullName>
    </alternativeName>
</protein>
<accession>P13394</accession>
<keyword id="KW-0119">Carbohydrate metabolism</keyword>
<keyword id="KW-0963">Cytoplasm</keyword>
<keyword id="KW-0326">Glycosidase</keyword>
<keyword id="KW-0378">Hydrolase</keyword>
<dbReference type="EC" id="3.2.1.26"/>
<dbReference type="EMBL" id="M26511">
    <property type="protein sequence ID" value="AAA27562.1"/>
    <property type="molecule type" value="Genomic_DNA"/>
</dbReference>
<dbReference type="PIR" id="JU0091">
    <property type="entry name" value="JU0091"/>
</dbReference>
<dbReference type="SMR" id="P13394"/>
<dbReference type="STRING" id="663.BAU10_17445"/>
<dbReference type="CAZy" id="GH32">
    <property type="family name" value="Glycoside Hydrolase Family 32"/>
</dbReference>
<dbReference type="eggNOG" id="COG1621">
    <property type="taxonomic scope" value="Bacteria"/>
</dbReference>
<dbReference type="UniPathway" id="UPA00238"/>
<dbReference type="GO" id="GO:0005737">
    <property type="term" value="C:cytoplasm"/>
    <property type="evidence" value="ECO:0007669"/>
    <property type="project" value="UniProtKB-SubCell"/>
</dbReference>
<dbReference type="GO" id="GO:0004564">
    <property type="term" value="F:beta-fructofuranosidase activity"/>
    <property type="evidence" value="ECO:0007669"/>
    <property type="project" value="UniProtKB-EC"/>
</dbReference>
<dbReference type="GO" id="GO:0005985">
    <property type="term" value="P:sucrose metabolic process"/>
    <property type="evidence" value="ECO:0007669"/>
    <property type="project" value="UniProtKB-UniPathway"/>
</dbReference>
<dbReference type="CDD" id="cd18623">
    <property type="entry name" value="GH32_ScrB-like"/>
    <property type="match status" value="1"/>
</dbReference>
<dbReference type="Gene3D" id="2.60.120.560">
    <property type="entry name" value="Exo-inulinase, domain 1"/>
    <property type="match status" value="1"/>
</dbReference>
<dbReference type="Gene3D" id="2.115.10.20">
    <property type="entry name" value="Glycosyl hydrolase domain, family 43"/>
    <property type="match status" value="1"/>
</dbReference>
<dbReference type="InterPro" id="IPR013320">
    <property type="entry name" value="ConA-like_dom_sf"/>
</dbReference>
<dbReference type="InterPro" id="IPR051214">
    <property type="entry name" value="GH32_Enzymes"/>
</dbReference>
<dbReference type="InterPro" id="IPR001362">
    <property type="entry name" value="Glyco_hydro_32"/>
</dbReference>
<dbReference type="InterPro" id="IPR018053">
    <property type="entry name" value="Glyco_hydro_32_AS"/>
</dbReference>
<dbReference type="InterPro" id="IPR013189">
    <property type="entry name" value="Glyco_hydro_32_C"/>
</dbReference>
<dbReference type="InterPro" id="IPR013148">
    <property type="entry name" value="Glyco_hydro_32_N"/>
</dbReference>
<dbReference type="InterPro" id="IPR023296">
    <property type="entry name" value="Glyco_hydro_beta-prop_sf"/>
</dbReference>
<dbReference type="InterPro" id="IPR006232">
    <property type="entry name" value="Suc6P_hydrolase"/>
</dbReference>
<dbReference type="NCBIfam" id="TIGR01322">
    <property type="entry name" value="scrB_fam"/>
    <property type="match status" value="1"/>
</dbReference>
<dbReference type="PANTHER" id="PTHR43101">
    <property type="entry name" value="BETA-FRUCTOSIDASE"/>
    <property type="match status" value="1"/>
</dbReference>
<dbReference type="PANTHER" id="PTHR43101:SF1">
    <property type="entry name" value="BETA-FRUCTOSIDASE"/>
    <property type="match status" value="1"/>
</dbReference>
<dbReference type="Pfam" id="PF08244">
    <property type="entry name" value="Glyco_hydro_32C"/>
    <property type="match status" value="1"/>
</dbReference>
<dbReference type="Pfam" id="PF00251">
    <property type="entry name" value="Glyco_hydro_32N"/>
    <property type="match status" value="1"/>
</dbReference>
<dbReference type="SMART" id="SM00640">
    <property type="entry name" value="Glyco_32"/>
    <property type="match status" value="1"/>
</dbReference>
<dbReference type="SUPFAM" id="SSF75005">
    <property type="entry name" value="Arabinanase/levansucrase/invertase"/>
    <property type="match status" value="1"/>
</dbReference>
<dbReference type="SUPFAM" id="SSF49899">
    <property type="entry name" value="Concanavalin A-like lectins/glucanases"/>
    <property type="match status" value="1"/>
</dbReference>
<dbReference type="PROSITE" id="PS00609">
    <property type="entry name" value="GLYCOSYL_HYDROL_F32"/>
    <property type="match status" value="1"/>
</dbReference>
<comment type="function">
    <text>Enables the bacterium to metabolize sucrose as a sole carbon source.</text>
</comment>
<comment type="catalytic activity">
    <reaction evidence="2">
        <text>Hydrolysis of terminal non-reducing beta-D-fructofuranoside residues in beta-D-fructofuranosides.</text>
        <dbReference type="EC" id="3.2.1.26"/>
    </reaction>
</comment>
<comment type="pathway">
    <text>Glycan biosynthesis; sucrose metabolism.</text>
</comment>
<comment type="subcellular location">
    <subcellularLocation>
        <location>Cytoplasm</location>
    </subcellularLocation>
</comment>
<comment type="induction">
    <text>By sucrose.</text>
</comment>
<comment type="similarity">
    <text evidence="3">Belongs to the glycosyl hydrolase 32 family.</text>
</comment>
<gene>
    <name type="primary">scrB</name>
</gene>
<feature type="chain" id="PRO_0000169878" description="Sucrose-6-phosphate hydrolase">
    <location>
        <begin position="1"/>
        <end position="484"/>
    </location>
</feature>
<feature type="active site" evidence="2">
    <location>
        <position position="51"/>
    </location>
</feature>
<feature type="binding site" evidence="1">
    <location>
        <begin position="48"/>
        <end position="51"/>
    </location>
    <ligand>
        <name>substrate</name>
    </ligand>
</feature>
<feature type="binding site" evidence="1">
    <location>
        <position position="67"/>
    </location>
    <ligand>
        <name>substrate</name>
    </ligand>
</feature>
<feature type="binding site" evidence="1">
    <location>
        <begin position="110"/>
        <end position="111"/>
    </location>
    <ligand>
        <name>substrate</name>
    </ligand>
</feature>
<feature type="binding site" evidence="1">
    <location>
        <begin position="168"/>
        <end position="169"/>
    </location>
    <ligand>
        <name>substrate</name>
    </ligand>
</feature>
<feature type="binding site" evidence="1">
    <location>
        <position position="223"/>
    </location>
    <ligand>
        <name>substrate</name>
    </ligand>
</feature>
<sequence length="484" mass="55657">MSLNNRWTVEQRYRRLEQIPQCDIEEMTLSRQQDKGFPSFHIAPKFGLLNDPNGLCYFNGEHHIFYQWTPVGPVHGMKYWYHLSTKDFIHFTDHGVGLHPDQDYDSHGVYSGGALVENNQVLLFFTGNKRDQNWNRIPTQCFATMDSDGSIEKHGVVIENEHYTEHFRDPKVWKKGDDYLMVVGAQTKTEHGSMALYQSKDLKTWQHKGPIKTKFSDLGYMWECPDFFEINGQSVMLFSPQGVSSSNPYDFKNIYSVAYIVGDQLNLESMTLENHQDILQPDYGFDFYAPQTYLDESGRRILIAWIGLPEIDTPSVTHQWAGMLSLPRELTLKDGFLVQTPLPELKSLRKEEVVFAQSHTLESTSCLIQLDLVGDGFELELSNLKGDNIVFSATEHEFMLDRRYMSHLYAEEFGGIRKAPRLDAKQTIDIYIDNSVIEIFINGGKHTMTSRFFIDDLNKVTLKGLEQARLFPLKGITGLFESAK</sequence>
<evidence type="ECO:0000250" key="1"/>
<evidence type="ECO:0000255" key="2">
    <source>
        <dbReference type="PROSITE-ProRule" id="PRU10067"/>
    </source>
</evidence>
<evidence type="ECO:0000305" key="3"/>
<organism>
    <name type="scientific">Vibrio alginolyticus</name>
    <dbReference type="NCBI Taxonomy" id="663"/>
    <lineage>
        <taxon>Bacteria</taxon>
        <taxon>Pseudomonadati</taxon>
        <taxon>Pseudomonadota</taxon>
        <taxon>Gammaproteobacteria</taxon>
        <taxon>Vibrionales</taxon>
        <taxon>Vibrionaceae</taxon>
        <taxon>Vibrio</taxon>
    </lineage>
</organism>
<reference key="1">
    <citation type="journal article" date="1989" name="Gene">
        <title>Nucleotide sequence and analysis of the Vibrio alginolyticus sucrase gene (scrB).</title>
        <authorList>
            <person name="Scholle R.R."/>
        </authorList>
    </citation>
    <scope>NUCLEOTIDE SEQUENCE [GENOMIC DNA]</scope>
</reference>